<name>DUT_CUTAK</name>
<sequence length="152" mass="15799">MADVVVPTVAVPEAMPRYAMPGDAGADLTCRHDVDLAPGERAMVETGVRVALPDGYVGFVNPRSGLAARHGLSIVNAPGTIDSGYRGQINVLLVNTDPREPVHLDAGSRIAQLVVVPVVEAIFEPVEDLDDTERGQGGYGSTGVSAMPPVDG</sequence>
<accession>Q6A8W1</accession>
<keyword id="KW-0378">Hydrolase</keyword>
<keyword id="KW-0460">Magnesium</keyword>
<keyword id="KW-0479">Metal-binding</keyword>
<keyword id="KW-0546">Nucleotide metabolism</keyword>
<evidence type="ECO:0000255" key="1">
    <source>
        <dbReference type="HAMAP-Rule" id="MF_00116"/>
    </source>
</evidence>
<evidence type="ECO:0000256" key="2">
    <source>
        <dbReference type="SAM" id="MobiDB-lite"/>
    </source>
</evidence>
<protein>
    <recommendedName>
        <fullName evidence="1">Deoxyuridine 5'-triphosphate nucleotidohydrolase</fullName>
        <shortName evidence="1">dUTPase</shortName>
        <ecNumber evidence="1">3.6.1.23</ecNumber>
    </recommendedName>
    <alternativeName>
        <fullName evidence="1">dUTP pyrophosphatase</fullName>
    </alternativeName>
</protein>
<proteinExistence type="inferred from homology"/>
<gene>
    <name evidence="1" type="primary">dut</name>
    <name type="ordered locus">PPA1054</name>
</gene>
<dbReference type="EC" id="3.6.1.23" evidence="1"/>
<dbReference type="EMBL" id="AE017283">
    <property type="protein sequence ID" value="AAT82805.1"/>
    <property type="molecule type" value="Genomic_DNA"/>
</dbReference>
<dbReference type="RefSeq" id="WP_002513663.1">
    <property type="nucleotide sequence ID" value="NZ_CP025935.1"/>
</dbReference>
<dbReference type="SMR" id="Q6A8W1"/>
<dbReference type="EnsemblBacteria" id="AAT82805">
    <property type="protein sequence ID" value="AAT82805"/>
    <property type="gene ID" value="PPA1054"/>
</dbReference>
<dbReference type="KEGG" id="pac:PPA1054"/>
<dbReference type="eggNOG" id="COG0756">
    <property type="taxonomic scope" value="Bacteria"/>
</dbReference>
<dbReference type="HOGENOM" id="CLU_068508_1_3_11"/>
<dbReference type="UniPathway" id="UPA00610">
    <property type="reaction ID" value="UER00666"/>
</dbReference>
<dbReference type="Proteomes" id="UP000000603">
    <property type="component" value="Chromosome"/>
</dbReference>
<dbReference type="GO" id="GO:0004170">
    <property type="term" value="F:dUTP diphosphatase activity"/>
    <property type="evidence" value="ECO:0007669"/>
    <property type="project" value="UniProtKB-UniRule"/>
</dbReference>
<dbReference type="GO" id="GO:0000287">
    <property type="term" value="F:magnesium ion binding"/>
    <property type="evidence" value="ECO:0007669"/>
    <property type="project" value="UniProtKB-UniRule"/>
</dbReference>
<dbReference type="GO" id="GO:0006226">
    <property type="term" value="P:dUMP biosynthetic process"/>
    <property type="evidence" value="ECO:0007669"/>
    <property type="project" value="UniProtKB-UniRule"/>
</dbReference>
<dbReference type="GO" id="GO:0046081">
    <property type="term" value="P:dUTP catabolic process"/>
    <property type="evidence" value="ECO:0007669"/>
    <property type="project" value="InterPro"/>
</dbReference>
<dbReference type="CDD" id="cd07557">
    <property type="entry name" value="trimeric_dUTPase"/>
    <property type="match status" value="1"/>
</dbReference>
<dbReference type="FunFam" id="2.70.40.10:FF:000008">
    <property type="entry name" value="Deoxyuridine 5'-triphosphate nucleotidohydrolase"/>
    <property type="match status" value="1"/>
</dbReference>
<dbReference type="Gene3D" id="2.70.40.10">
    <property type="match status" value="1"/>
</dbReference>
<dbReference type="HAMAP" id="MF_00116">
    <property type="entry name" value="dUTPase_bact"/>
    <property type="match status" value="1"/>
</dbReference>
<dbReference type="InterPro" id="IPR008181">
    <property type="entry name" value="dUTPase"/>
</dbReference>
<dbReference type="InterPro" id="IPR029054">
    <property type="entry name" value="dUTPase-like"/>
</dbReference>
<dbReference type="InterPro" id="IPR036157">
    <property type="entry name" value="dUTPase-like_sf"/>
</dbReference>
<dbReference type="InterPro" id="IPR033704">
    <property type="entry name" value="dUTPase_trimeric"/>
</dbReference>
<dbReference type="NCBIfam" id="TIGR00576">
    <property type="entry name" value="dut"/>
    <property type="match status" value="1"/>
</dbReference>
<dbReference type="NCBIfam" id="NF001862">
    <property type="entry name" value="PRK00601.1"/>
    <property type="match status" value="1"/>
</dbReference>
<dbReference type="PANTHER" id="PTHR11241">
    <property type="entry name" value="DEOXYURIDINE 5'-TRIPHOSPHATE NUCLEOTIDOHYDROLASE"/>
    <property type="match status" value="1"/>
</dbReference>
<dbReference type="PANTHER" id="PTHR11241:SF0">
    <property type="entry name" value="DEOXYURIDINE 5'-TRIPHOSPHATE NUCLEOTIDOHYDROLASE"/>
    <property type="match status" value="1"/>
</dbReference>
<dbReference type="Pfam" id="PF00692">
    <property type="entry name" value="dUTPase"/>
    <property type="match status" value="1"/>
</dbReference>
<dbReference type="SUPFAM" id="SSF51283">
    <property type="entry name" value="dUTPase-like"/>
    <property type="match status" value="1"/>
</dbReference>
<comment type="function">
    <text evidence="1">This enzyme is involved in nucleotide metabolism: it produces dUMP, the immediate precursor of thymidine nucleotides and it decreases the intracellular concentration of dUTP so that uracil cannot be incorporated into DNA.</text>
</comment>
<comment type="catalytic activity">
    <reaction evidence="1">
        <text>dUTP + H2O = dUMP + diphosphate + H(+)</text>
        <dbReference type="Rhea" id="RHEA:10248"/>
        <dbReference type="ChEBI" id="CHEBI:15377"/>
        <dbReference type="ChEBI" id="CHEBI:15378"/>
        <dbReference type="ChEBI" id="CHEBI:33019"/>
        <dbReference type="ChEBI" id="CHEBI:61555"/>
        <dbReference type="ChEBI" id="CHEBI:246422"/>
        <dbReference type="EC" id="3.6.1.23"/>
    </reaction>
</comment>
<comment type="cofactor">
    <cofactor evidence="1">
        <name>Mg(2+)</name>
        <dbReference type="ChEBI" id="CHEBI:18420"/>
    </cofactor>
</comment>
<comment type="pathway">
    <text evidence="1">Pyrimidine metabolism; dUMP biosynthesis; dUMP from dCTP (dUTP route): step 2/2.</text>
</comment>
<comment type="similarity">
    <text evidence="1">Belongs to the dUTPase family.</text>
</comment>
<feature type="chain" id="PRO_0000182894" description="Deoxyuridine 5'-triphosphate nucleotidohydrolase">
    <location>
        <begin position="1"/>
        <end position="152"/>
    </location>
</feature>
<feature type="region of interest" description="Disordered" evidence="2">
    <location>
        <begin position="129"/>
        <end position="152"/>
    </location>
</feature>
<feature type="binding site" evidence="1">
    <location>
        <begin position="63"/>
        <end position="65"/>
    </location>
    <ligand>
        <name>substrate</name>
    </ligand>
</feature>
<feature type="binding site" evidence="1">
    <location>
        <position position="76"/>
    </location>
    <ligand>
        <name>substrate</name>
    </ligand>
</feature>
<feature type="binding site" evidence="1">
    <location>
        <begin position="80"/>
        <end position="82"/>
    </location>
    <ligand>
        <name>substrate</name>
    </ligand>
</feature>
<reference key="1">
    <citation type="journal article" date="2004" name="Science">
        <title>The complete genome sequence of Propionibacterium acnes, a commensal of human skin.</title>
        <authorList>
            <person name="Brueggemann H."/>
            <person name="Henne A."/>
            <person name="Hoster F."/>
            <person name="Liesegang H."/>
            <person name="Wiezer A."/>
            <person name="Strittmatter A."/>
            <person name="Hujer S."/>
            <person name="Duerre P."/>
            <person name="Gottschalk G."/>
        </authorList>
    </citation>
    <scope>NUCLEOTIDE SEQUENCE [LARGE SCALE GENOMIC DNA]</scope>
    <source>
        <strain>DSM 16379 / KPA171202</strain>
    </source>
</reference>
<organism>
    <name type="scientific">Cutibacterium acnes (strain DSM 16379 / KPA171202)</name>
    <name type="common">Propionibacterium acnes</name>
    <dbReference type="NCBI Taxonomy" id="267747"/>
    <lineage>
        <taxon>Bacteria</taxon>
        <taxon>Bacillati</taxon>
        <taxon>Actinomycetota</taxon>
        <taxon>Actinomycetes</taxon>
        <taxon>Propionibacteriales</taxon>
        <taxon>Propionibacteriaceae</taxon>
        <taxon>Cutibacterium</taxon>
    </lineage>
</organism>